<comment type="function">
    <text evidence="1">One of the essential components for the initiation of protein synthesis. Stabilizes the binding of IF-2 and IF-3 on the 30S subunit to which N-formylmethionyl-tRNA(fMet) subsequently binds. Helps modulate mRNA selection, yielding the 30S pre-initiation complex (PIC). Upon addition of the 50S ribosomal subunit IF-1, IF-2 and IF-3 are released leaving the mature 70S translation initiation complex.</text>
</comment>
<comment type="subunit">
    <text evidence="1">Component of the 30S ribosomal translation pre-initiation complex which assembles on the 30S ribosome in the order IF-2 and IF-3, IF-1 and N-formylmethionyl-tRNA(fMet); mRNA recruitment can occur at any time during PIC assembly.</text>
</comment>
<comment type="subcellular location">
    <subcellularLocation>
        <location evidence="1">Cytoplasm</location>
    </subcellularLocation>
</comment>
<comment type="similarity">
    <text evidence="1">Belongs to the IF-1 family.</text>
</comment>
<comment type="sequence caution" evidence="2">
    <conflict type="erroneous initiation">
        <sequence resource="EMBL-CDS" id="ABV10817"/>
    </conflict>
    <text>Extended N-terminus.</text>
</comment>
<proteinExistence type="inferred from homology"/>
<evidence type="ECO:0000255" key="1">
    <source>
        <dbReference type="HAMAP-Rule" id="MF_00075"/>
    </source>
</evidence>
<evidence type="ECO:0000305" key="2"/>
<feature type="chain" id="PRO_0000338934" description="Translation initiation factor IF-1">
    <location>
        <begin position="1"/>
        <end position="72"/>
    </location>
</feature>
<feature type="domain" description="S1-like" evidence="1">
    <location>
        <begin position="1"/>
        <end position="72"/>
    </location>
</feature>
<organism>
    <name type="scientific">Streptococcus gordonii (strain Challis / ATCC 35105 / BCRC 15272 / CH1 / DL1 / V288)</name>
    <dbReference type="NCBI Taxonomy" id="467705"/>
    <lineage>
        <taxon>Bacteria</taxon>
        <taxon>Bacillati</taxon>
        <taxon>Bacillota</taxon>
        <taxon>Bacilli</taxon>
        <taxon>Lactobacillales</taxon>
        <taxon>Streptococcaceae</taxon>
        <taxon>Streptococcus</taxon>
    </lineage>
</organism>
<dbReference type="EMBL" id="CP000725">
    <property type="protein sequence ID" value="ABV10817.1"/>
    <property type="status" value="ALT_INIT"/>
    <property type="molecule type" value="Genomic_DNA"/>
</dbReference>
<dbReference type="RefSeq" id="WP_008809895.1">
    <property type="nucleotide sequence ID" value="NC_009785.1"/>
</dbReference>
<dbReference type="SMR" id="A8AZK3"/>
<dbReference type="STRING" id="467705.SGO_1963"/>
<dbReference type="GeneID" id="93786864"/>
<dbReference type="KEGG" id="sgo:SGO_1963"/>
<dbReference type="eggNOG" id="COG0361">
    <property type="taxonomic scope" value="Bacteria"/>
</dbReference>
<dbReference type="HOGENOM" id="CLU_151267_1_0_9"/>
<dbReference type="Proteomes" id="UP000001131">
    <property type="component" value="Chromosome"/>
</dbReference>
<dbReference type="GO" id="GO:0005829">
    <property type="term" value="C:cytosol"/>
    <property type="evidence" value="ECO:0007669"/>
    <property type="project" value="TreeGrafter"/>
</dbReference>
<dbReference type="GO" id="GO:0043022">
    <property type="term" value="F:ribosome binding"/>
    <property type="evidence" value="ECO:0007669"/>
    <property type="project" value="UniProtKB-UniRule"/>
</dbReference>
<dbReference type="GO" id="GO:0019843">
    <property type="term" value="F:rRNA binding"/>
    <property type="evidence" value="ECO:0007669"/>
    <property type="project" value="UniProtKB-UniRule"/>
</dbReference>
<dbReference type="GO" id="GO:0003743">
    <property type="term" value="F:translation initiation factor activity"/>
    <property type="evidence" value="ECO:0007669"/>
    <property type="project" value="UniProtKB-UniRule"/>
</dbReference>
<dbReference type="CDD" id="cd04451">
    <property type="entry name" value="S1_IF1"/>
    <property type="match status" value="1"/>
</dbReference>
<dbReference type="FunFam" id="2.40.50.140:FF:000002">
    <property type="entry name" value="Translation initiation factor IF-1"/>
    <property type="match status" value="1"/>
</dbReference>
<dbReference type="Gene3D" id="2.40.50.140">
    <property type="entry name" value="Nucleic acid-binding proteins"/>
    <property type="match status" value="1"/>
</dbReference>
<dbReference type="HAMAP" id="MF_00075">
    <property type="entry name" value="IF_1"/>
    <property type="match status" value="1"/>
</dbReference>
<dbReference type="InterPro" id="IPR012340">
    <property type="entry name" value="NA-bd_OB-fold"/>
</dbReference>
<dbReference type="InterPro" id="IPR006196">
    <property type="entry name" value="RNA-binding_domain_S1_IF1"/>
</dbReference>
<dbReference type="InterPro" id="IPR003029">
    <property type="entry name" value="S1_domain"/>
</dbReference>
<dbReference type="InterPro" id="IPR004368">
    <property type="entry name" value="TIF_IF1"/>
</dbReference>
<dbReference type="NCBIfam" id="TIGR00008">
    <property type="entry name" value="infA"/>
    <property type="match status" value="1"/>
</dbReference>
<dbReference type="PANTHER" id="PTHR33370">
    <property type="entry name" value="TRANSLATION INITIATION FACTOR IF-1, CHLOROPLASTIC"/>
    <property type="match status" value="1"/>
</dbReference>
<dbReference type="PANTHER" id="PTHR33370:SF1">
    <property type="entry name" value="TRANSLATION INITIATION FACTOR IF-1, CHLOROPLASTIC"/>
    <property type="match status" value="1"/>
</dbReference>
<dbReference type="Pfam" id="PF01176">
    <property type="entry name" value="eIF-1a"/>
    <property type="match status" value="1"/>
</dbReference>
<dbReference type="SMART" id="SM00316">
    <property type="entry name" value="S1"/>
    <property type="match status" value="1"/>
</dbReference>
<dbReference type="SUPFAM" id="SSF50249">
    <property type="entry name" value="Nucleic acid-binding proteins"/>
    <property type="match status" value="1"/>
</dbReference>
<dbReference type="PROSITE" id="PS50832">
    <property type="entry name" value="S1_IF1_TYPE"/>
    <property type="match status" value="1"/>
</dbReference>
<protein>
    <recommendedName>
        <fullName evidence="1">Translation initiation factor IF-1</fullName>
    </recommendedName>
</protein>
<keyword id="KW-0963">Cytoplasm</keyword>
<keyword id="KW-0396">Initiation factor</keyword>
<keyword id="KW-0648">Protein biosynthesis</keyword>
<keyword id="KW-1185">Reference proteome</keyword>
<keyword id="KW-0694">RNA-binding</keyword>
<keyword id="KW-0699">rRNA-binding</keyword>
<sequence>MAKDDVIEVEGKVIDTMPNAMFTVELENGHQILATVSGKIRKNYIRILAGDRVTVEMSPYDLTRGRITYRFK</sequence>
<reference key="1">
    <citation type="journal article" date="2007" name="J. Bacteriol.">
        <title>Genome-wide transcriptional changes in Streptococcus gordonii in response to competence signaling peptide.</title>
        <authorList>
            <person name="Vickerman M.M."/>
            <person name="Iobst S."/>
            <person name="Jesionowski A.M."/>
            <person name="Gill S.R."/>
        </authorList>
    </citation>
    <scope>NUCLEOTIDE SEQUENCE [LARGE SCALE GENOMIC DNA]</scope>
    <source>
        <strain>Challis / ATCC 35105 / BCRC 15272 / CH1 / DL1 / V288</strain>
    </source>
</reference>
<accession>A8AZK3</accession>
<gene>
    <name evidence="1" type="primary">infA</name>
    <name type="ordered locus">SGO_1963</name>
</gene>
<name>IF1_STRGC</name>